<sequence length="483" mass="55889">MLTLDTLNVMLAVSEEGLIEEMIIALLASPQLAVFFEKFPRLKAAITDDVPRWREALRSRLKDARVPPELTEEVMCYQQSQLLSTPQFIVQLPQILDLLHRLNSPWAEQARQLVDANSTITSALHTLFLQRWRLSLIVQATTLNQQLLEEEREQLLSEVQERMTLSGQLEPILADNNTAAGRLWDMSAGQLKRGDYQLIVKYGEFLNEQPELKRLAEQLGRSREAKSIPRNDAQMETFRTLVREPATVPEQVDGLQQSDDILRLLPPELATLGITELEYEFYRRLVEKQLLTYRLHGESWREKVIERPVVHKDYDEQPRGPFIVCVDTSGSMGGFNEQCAKAFCLALMRIALAENRRCYIMLFSTEIVRYELSGPQGIEQAIRFLSQQFRGGTDLASCFRAIMERLQSREWFDADAVVISDFIAQRLPDDVTSKVKELQRVHQHRFHAVAMSAHGKPGIMRIFDHIWRFDTGMRSRLLRRWRR</sequence>
<keyword id="KW-0143">Chaperone</keyword>
<keyword id="KW-0963">Cytoplasm</keyword>
<proteinExistence type="inferred from homology"/>
<dbReference type="EMBL" id="CU928163">
    <property type="protein sequence ID" value="CAR15415.1"/>
    <property type="molecule type" value="Genomic_DNA"/>
</dbReference>
<dbReference type="RefSeq" id="WP_000956632.1">
    <property type="nucleotide sequence ID" value="NC_011751.1"/>
</dbReference>
<dbReference type="RefSeq" id="YP_002414910.1">
    <property type="nucleotide sequence ID" value="NC_011751.1"/>
</dbReference>
<dbReference type="SMR" id="B7NF61"/>
<dbReference type="STRING" id="585056.ECUMN_4275"/>
<dbReference type="KEGG" id="eum:ECUMN_4275"/>
<dbReference type="PATRIC" id="fig|585056.7.peg.4447"/>
<dbReference type="HOGENOM" id="CLU_022130_0_0_6"/>
<dbReference type="Proteomes" id="UP000007097">
    <property type="component" value="Chromosome"/>
</dbReference>
<dbReference type="GO" id="GO:0005829">
    <property type="term" value="C:cytosol"/>
    <property type="evidence" value="ECO:0007669"/>
    <property type="project" value="TreeGrafter"/>
</dbReference>
<dbReference type="CDD" id="cd01462">
    <property type="entry name" value="VWA_YIEM_type"/>
    <property type="match status" value="1"/>
</dbReference>
<dbReference type="Gene3D" id="3.40.50.410">
    <property type="entry name" value="von Willebrand factor, type A domain"/>
    <property type="match status" value="1"/>
</dbReference>
<dbReference type="HAMAP" id="MF_01626">
    <property type="entry name" value="ViaA"/>
    <property type="match status" value="1"/>
</dbReference>
<dbReference type="InterPro" id="IPR008912">
    <property type="entry name" value="Uncharacterised_CoxE"/>
</dbReference>
<dbReference type="InterPro" id="IPR023481">
    <property type="entry name" value="Uncharacterised_ViaA"/>
</dbReference>
<dbReference type="InterPro" id="IPR002035">
    <property type="entry name" value="VWF_A"/>
</dbReference>
<dbReference type="InterPro" id="IPR036465">
    <property type="entry name" value="vWFA_dom_sf"/>
</dbReference>
<dbReference type="NCBIfam" id="NF008230">
    <property type="entry name" value="PRK10997.1"/>
    <property type="match status" value="1"/>
</dbReference>
<dbReference type="PANTHER" id="PTHR36846">
    <property type="entry name" value="PROTEIN VIAA"/>
    <property type="match status" value="1"/>
</dbReference>
<dbReference type="PANTHER" id="PTHR36846:SF1">
    <property type="entry name" value="PROTEIN VIAA"/>
    <property type="match status" value="1"/>
</dbReference>
<dbReference type="Pfam" id="PF05762">
    <property type="entry name" value="VWA_CoxE"/>
    <property type="match status" value="1"/>
</dbReference>
<dbReference type="SMART" id="SM00327">
    <property type="entry name" value="VWA"/>
    <property type="match status" value="1"/>
</dbReference>
<dbReference type="SUPFAM" id="SSF53300">
    <property type="entry name" value="vWA-like"/>
    <property type="match status" value="1"/>
</dbReference>
<protein>
    <recommendedName>
        <fullName evidence="1">Regulatory protein ViaA</fullName>
    </recommendedName>
    <alternativeName>
        <fullName evidence="1">VWA interacting with AAA+ ATPase</fullName>
    </alternativeName>
</protein>
<accession>B7NF61</accession>
<organism>
    <name type="scientific">Escherichia coli O17:K52:H18 (strain UMN026 / ExPEC)</name>
    <dbReference type="NCBI Taxonomy" id="585056"/>
    <lineage>
        <taxon>Bacteria</taxon>
        <taxon>Pseudomonadati</taxon>
        <taxon>Pseudomonadota</taxon>
        <taxon>Gammaproteobacteria</taxon>
        <taxon>Enterobacterales</taxon>
        <taxon>Enterobacteriaceae</taxon>
        <taxon>Escherichia</taxon>
    </lineage>
</organism>
<reference key="1">
    <citation type="journal article" date="2009" name="PLoS Genet.">
        <title>Organised genome dynamics in the Escherichia coli species results in highly diverse adaptive paths.</title>
        <authorList>
            <person name="Touchon M."/>
            <person name="Hoede C."/>
            <person name="Tenaillon O."/>
            <person name="Barbe V."/>
            <person name="Baeriswyl S."/>
            <person name="Bidet P."/>
            <person name="Bingen E."/>
            <person name="Bonacorsi S."/>
            <person name="Bouchier C."/>
            <person name="Bouvet O."/>
            <person name="Calteau A."/>
            <person name="Chiapello H."/>
            <person name="Clermont O."/>
            <person name="Cruveiller S."/>
            <person name="Danchin A."/>
            <person name="Diard M."/>
            <person name="Dossat C."/>
            <person name="Karoui M.E."/>
            <person name="Frapy E."/>
            <person name="Garry L."/>
            <person name="Ghigo J.M."/>
            <person name="Gilles A.M."/>
            <person name="Johnson J."/>
            <person name="Le Bouguenec C."/>
            <person name="Lescat M."/>
            <person name="Mangenot S."/>
            <person name="Martinez-Jehanne V."/>
            <person name="Matic I."/>
            <person name="Nassif X."/>
            <person name="Oztas S."/>
            <person name="Petit M.A."/>
            <person name="Pichon C."/>
            <person name="Rouy Z."/>
            <person name="Ruf C.S."/>
            <person name="Schneider D."/>
            <person name="Tourret J."/>
            <person name="Vacherie B."/>
            <person name="Vallenet D."/>
            <person name="Medigue C."/>
            <person name="Rocha E.P.C."/>
            <person name="Denamur E."/>
        </authorList>
    </citation>
    <scope>NUCLEOTIDE SEQUENCE [LARGE SCALE GENOMIC DNA]</scope>
    <source>
        <strain>UMN026 / ExPEC</strain>
    </source>
</reference>
<evidence type="ECO:0000255" key="1">
    <source>
        <dbReference type="HAMAP-Rule" id="MF_01626"/>
    </source>
</evidence>
<name>VIAA_ECOLU</name>
<comment type="function">
    <text evidence="1">Component of the RavA-ViaA chaperone complex, which may act on the membrane to optimize the function of some of the respiratory chains. ViaA stimulates the ATPase activity of RavA.</text>
</comment>
<comment type="subunit">
    <text evidence="1">Homodimer. Interacts with RavA.</text>
</comment>
<comment type="subcellular location">
    <subcellularLocation>
        <location evidence="1">Cytoplasm</location>
    </subcellularLocation>
</comment>
<comment type="similarity">
    <text evidence="1">Belongs to the ViaA family.</text>
</comment>
<feature type="chain" id="PRO_1000186148" description="Regulatory protein ViaA">
    <location>
        <begin position="1"/>
        <end position="483"/>
    </location>
</feature>
<gene>
    <name evidence="1" type="primary">viaA</name>
    <name type="ordered locus">ECUMN_4275</name>
</gene>